<keyword id="KW-1185">Reference proteome</keyword>
<reference key="1">
    <citation type="journal article" date="1996" name="Science">
        <title>Complete genome sequence of the methanogenic archaeon, Methanococcus jannaschii.</title>
        <authorList>
            <person name="Bult C.J."/>
            <person name="White O."/>
            <person name="Olsen G.J."/>
            <person name="Zhou L."/>
            <person name="Fleischmann R.D."/>
            <person name="Sutton G.G."/>
            <person name="Blake J.A."/>
            <person name="FitzGerald L.M."/>
            <person name="Clayton R.A."/>
            <person name="Gocayne J.D."/>
            <person name="Kerlavage A.R."/>
            <person name="Dougherty B.A."/>
            <person name="Tomb J.-F."/>
            <person name="Adams M.D."/>
            <person name="Reich C.I."/>
            <person name="Overbeek R."/>
            <person name="Kirkness E.F."/>
            <person name="Weinstock K.G."/>
            <person name="Merrick J.M."/>
            <person name="Glodek A."/>
            <person name="Scott J.L."/>
            <person name="Geoghagen N.S.M."/>
            <person name="Weidman J.F."/>
            <person name="Fuhrmann J.L."/>
            <person name="Nguyen D."/>
            <person name="Utterback T.R."/>
            <person name="Kelley J.M."/>
            <person name="Peterson J.D."/>
            <person name="Sadow P.W."/>
            <person name="Hanna M.C."/>
            <person name="Cotton M.D."/>
            <person name="Roberts K.M."/>
            <person name="Hurst M.A."/>
            <person name="Kaine B.P."/>
            <person name="Borodovsky M."/>
            <person name="Klenk H.-P."/>
            <person name="Fraser C.M."/>
            <person name="Smith H.O."/>
            <person name="Woese C.R."/>
            <person name="Venter J.C."/>
        </authorList>
    </citation>
    <scope>NUCLEOTIDE SEQUENCE [LARGE SCALE GENOMIC DNA]</scope>
    <source>
        <strain>ATCC 43067 / DSM 2661 / JAL-1 / JCM 10045 / NBRC 100440</strain>
    </source>
</reference>
<comment type="similarity">
    <text evidence="1">Belongs to the M.jannaschii MJ0023/MJ0349/MJ1072/MJ1074/MJ1107/MJECL16 family.</text>
</comment>
<gene>
    <name type="ordered locus">MJ0349</name>
</gene>
<protein>
    <recommendedName>
        <fullName>Uncharacterized protein MJ0349</fullName>
    </recommendedName>
</protein>
<proteinExistence type="inferred from homology"/>
<organism>
    <name type="scientific">Methanocaldococcus jannaschii (strain ATCC 43067 / DSM 2661 / JAL-1 / JCM 10045 / NBRC 100440)</name>
    <name type="common">Methanococcus jannaschii</name>
    <dbReference type="NCBI Taxonomy" id="243232"/>
    <lineage>
        <taxon>Archaea</taxon>
        <taxon>Methanobacteriati</taxon>
        <taxon>Methanobacteriota</taxon>
        <taxon>Methanomada group</taxon>
        <taxon>Methanococci</taxon>
        <taxon>Methanococcales</taxon>
        <taxon>Methanocaldococcaceae</taxon>
        <taxon>Methanocaldococcus</taxon>
    </lineage>
</organism>
<accession>Q57795</accession>
<feature type="chain" id="PRO_0000106820" description="Uncharacterized protein MJ0349">
    <location>
        <begin position="1"/>
        <end position="105"/>
    </location>
</feature>
<dbReference type="EMBL" id="L77117">
    <property type="protein sequence ID" value="AAB98338.1"/>
    <property type="molecule type" value="Genomic_DNA"/>
</dbReference>
<dbReference type="PIR" id="E64343">
    <property type="entry name" value="E64343"/>
</dbReference>
<dbReference type="RefSeq" id="WP_010869848.1">
    <property type="nucleotide sequence ID" value="NC_000909.1"/>
</dbReference>
<dbReference type="SMR" id="Q57795"/>
<dbReference type="STRING" id="243232.MJ_0349"/>
<dbReference type="PaxDb" id="243232-MJ_0349"/>
<dbReference type="EnsemblBacteria" id="AAB98338">
    <property type="protein sequence ID" value="AAB98338"/>
    <property type="gene ID" value="MJ_0349"/>
</dbReference>
<dbReference type="GeneID" id="1451206"/>
<dbReference type="KEGG" id="mja:MJ_0349"/>
<dbReference type="eggNOG" id="arCOG09652">
    <property type="taxonomic scope" value="Archaea"/>
</dbReference>
<dbReference type="HOGENOM" id="CLU_165881_0_0_2"/>
<dbReference type="InParanoid" id="Q57795"/>
<dbReference type="OrthoDB" id="66010at2157"/>
<dbReference type="PhylomeDB" id="Q57795"/>
<dbReference type="Proteomes" id="UP000000805">
    <property type="component" value="Chromosome"/>
</dbReference>
<name>Y349_METJA</name>
<sequence>MAVAYAKLYELILKKVKDEKEAEELYNAIIEIVKEEKLAVKTELKDELRGELATKEDIKYLDGKIEMVKKELEYKLIIHTLIILFAIIITNPNAIELIKLLFGFK</sequence>
<evidence type="ECO:0000305" key="1"/>